<comment type="catalytic activity">
    <reaction evidence="1">
        <text>tRNA(Phe) + L-phenylalanine + ATP = L-phenylalanyl-tRNA(Phe) + AMP + diphosphate + H(+)</text>
        <dbReference type="Rhea" id="RHEA:19413"/>
        <dbReference type="Rhea" id="RHEA-COMP:9668"/>
        <dbReference type="Rhea" id="RHEA-COMP:9699"/>
        <dbReference type="ChEBI" id="CHEBI:15378"/>
        <dbReference type="ChEBI" id="CHEBI:30616"/>
        <dbReference type="ChEBI" id="CHEBI:33019"/>
        <dbReference type="ChEBI" id="CHEBI:58095"/>
        <dbReference type="ChEBI" id="CHEBI:78442"/>
        <dbReference type="ChEBI" id="CHEBI:78531"/>
        <dbReference type="ChEBI" id="CHEBI:456215"/>
        <dbReference type="EC" id="6.1.1.20"/>
    </reaction>
</comment>
<comment type="cofactor">
    <cofactor evidence="1">
        <name>Mg(2+)</name>
        <dbReference type="ChEBI" id="CHEBI:18420"/>
    </cofactor>
</comment>
<comment type="subunit">
    <text evidence="1">Tetramer of two alpha and two beta subunits.</text>
</comment>
<comment type="subcellular location">
    <subcellularLocation>
        <location evidence="1">Cytoplasm</location>
    </subcellularLocation>
</comment>
<comment type="similarity">
    <text evidence="1">Belongs to the phenylalanyl-tRNA synthetase beta subunit family. Type 2 subfamily.</text>
</comment>
<proteinExistence type="inferred from homology"/>
<reference key="1">
    <citation type="journal article" date="2009" name="Proc. Natl. Acad. Sci. U.S.A.">
        <title>Biogeography of the Sulfolobus islandicus pan-genome.</title>
        <authorList>
            <person name="Reno M.L."/>
            <person name="Held N.L."/>
            <person name="Fields C.J."/>
            <person name="Burke P.V."/>
            <person name="Whitaker R.J."/>
        </authorList>
    </citation>
    <scope>NUCLEOTIDE SEQUENCE [LARGE SCALE GENOMIC DNA]</scope>
    <source>
        <strain>Y.N.15.51 / Yellowstone #2</strain>
    </source>
</reference>
<name>SYFB_SACI1</name>
<dbReference type="EC" id="6.1.1.20" evidence="1"/>
<dbReference type="EMBL" id="CP001404">
    <property type="protein sequence ID" value="ACP47895.1"/>
    <property type="molecule type" value="Genomic_DNA"/>
</dbReference>
<dbReference type="RefSeq" id="WP_012716484.1">
    <property type="nucleotide sequence ID" value="NC_012623.1"/>
</dbReference>
<dbReference type="SMR" id="C3NMS5"/>
<dbReference type="GeneID" id="7811197"/>
<dbReference type="KEGG" id="sin:YN1551_0770"/>
<dbReference type="HOGENOM" id="CLU_020279_3_0_2"/>
<dbReference type="Proteomes" id="UP000006818">
    <property type="component" value="Chromosome"/>
</dbReference>
<dbReference type="GO" id="GO:0009328">
    <property type="term" value="C:phenylalanine-tRNA ligase complex"/>
    <property type="evidence" value="ECO:0007669"/>
    <property type="project" value="TreeGrafter"/>
</dbReference>
<dbReference type="GO" id="GO:0005524">
    <property type="term" value="F:ATP binding"/>
    <property type="evidence" value="ECO:0007669"/>
    <property type="project" value="UniProtKB-UniRule"/>
</dbReference>
<dbReference type="GO" id="GO:0000287">
    <property type="term" value="F:magnesium ion binding"/>
    <property type="evidence" value="ECO:0007669"/>
    <property type="project" value="InterPro"/>
</dbReference>
<dbReference type="GO" id="GO:0004826">
    <property type="term" value="F:phenylalanine-tRNA ligase activity"/>
    <property type="evidence" value="ECO:0007669"/>
    <property type="project" value="UniProtKB-UniRule"/>
</dbReference>
<dbReference type="GO" id="GO:0003723">
    <property type="term" value="F:RNA binding"/>
    <property type="evidence" value="ECO:0007669"/>
    <property type="project" value="InterPro"/>
</dbReference>
<dbReference type="GO" id="GO:0006432">
    <property type="term" value="P:phenylalanyl-tRNA aminoacylation"/>
    <property type="evidence" value="ECO:0007669"/>
    <property type="project" value="UniProtKB-UniRule"/>
</dbReference>
<dbReference type="CDD" id="cd00769">
    <property type="entry name" value="PheRS_beta_core"/>
    <property type="match status" value="1"/>
</dbReference>
<dbReference type="FunFam" id="3.30.56.10:FF:000014">
    <property type="entry name" value="Phenylalanine--tRNA ligase beta subunit"/>
    <property type="match status" value="1"/>
</dbReference>
<dbReference type="Gene3D" id="3.30.56.10">
    <property type="match status" value="2"/>
</dbReference>
<dbReference type="Gene3D" id="3.30.930.10">
    <property type="entry name" value="Bira Bifunctional Protein, Domain 2"/>
    <property type="match status" value="1"/>
</dbReference>
<dbReference type="Gene3D" id="3.50.40.10">
    <property type="entry name" value="Phenylalanyl-trna Synthetase, Chain B, domain 3"/>
    <property type="match status" value="1"/>
</dbReference>
<dbReference type="HAMAP" id="MF_00284">
    <property type="entry name" value="Phe_tRNA_synth_beta2"/>
    <property type="match status" value="1"/>
</dbReference>
<dbReference type="InterPro" id="IPR045864">
    <property type="entry name" value="aa-tRNA-synth_II/BPL/LPL"/>
</dbReference>
<dbReference type="InterPro" id="IPR005146">
    <property type="entry name" value="B3/B4_tRNA-bd"/>
</dbReference>
<dbReference type="InterPro" id="IPR009061">
    <property type="entry name" value="DNA-bd_dom_put_sf"/>
</dbReference>
<dbReference type="InterPro" id="IPR045060">
    <property type="entry name" value="Phe-tRNA-ligase_IIc_bsu"/>
</dbReference>
<dbReference type="InterPro" id="IPR004531">
    <property type="entry name" value="Phe-tRNA-synth_IIc_bsu_arc_euk"/>
</dbReference>
<dbReference type="InterPro" id="IPR020825">
    <property type="entry name" value="Phe-tRNA_synthase-like_B3/B4"/>
</dbReference>
<dbReference type="InterPro" id="IPR022918">
    <property type="entry name" value="Phe_tRNA_ligase_beta2_arc"/>
</dbReference>
<dbReference type="InterPro" id="IPR041616">
    <property type="entry name" value="PheRS_beta_core"/>
</dbReference>
<dbReference type="InterPro" id="IPR005147">
    <property type="entry name" value="tRNA_synthase_B5-dom"/>
</dbReference>
<dbReference type="NCBIfam" id="TIGR00471">
    <property type="entry name" value="pheT_arch"/>
    <property type="match status" value="1"/>
</dbReference>
<dbReference type="PANTHER" id="PTHR10947:SF0">
    <property type="entry name" value="PHENYLALANINE--TRNA LIGASE BETA SUBUNIT"/>
    <property type="match status" value="1"/>
</dbReference>
<dbReference type="PANTHER" id="PTHR10947">
    <property type="entry name" value="PHENYLALANYL-TRNA SYNTHETASE BETA CHAIN AND LEUCINE-RICH REPEAT-CONTAINING PROTEIN 47"/>
    <property type="match status" value="1"/>
</dbReference>
<dbReference type="Pfam" id="PF03483">
    <property type="entry name" value="B3_4"/>
    <property type="match status" value="1"/>
</dbReference>
<dbReference type="Pfam" id="PF03484">
    <property type="entry name" value="B5"/>
    <property type="match status" value="1"/>
</dbReference>
<dbReference type="Pfam" id="PF17759">
    <property type="entry name" value="tRNA_synthFbeta"/>
    <property type="match status" value="1"/>
</dbReference>
<dbReference type="SMART" id="SM00873">
    <property type="entry name" value="B3_4"/>
    <property type="match status" value="1"/>
</dbReference>
<dbReference type="SMART" id="SM00874">
    <property type="entry name" value="B5"/>
    <property type="match status" value="1"/>
</dbReference>
<dbReference type="SUPFAM" id="SSF55681">
    <property type="entry name" value="Class II aaRS and biotin synthetases"/>
    <property type="match status" value="1"/>
</dbReference>
<dbReference type="SUPFAM" id="SSF46955">
    <property type="entry name" value="Putative DNA-binding domain"/>
    <property type="match status" value="2"/>
</dbReference>
<dbReference type="PROSITE" id="PS51483">
    <property type="entry name" value="B5"/>
    <property type="match status" value="1"/>
</dbReference>
<organism>
    <name type="scientific">Saccharolobus islandicus (strain Y.N.15.51 / Yellowstone #2)</name>
    <name type="common">Sulfolobus islandicus</name>
    <dbReference type="NCBI Taxonomy" id="419942"/>
    <lineage>
        <taxon>Archaea</taxon>
        <taxon>Thermoproteota</taxon>
        <taxon>Thermoprotei</taxon>
        <taxon>Sulfolobales</taxon>
        <taxon>Sulfolobaceae</taxon>
        <taxon>Saccharolobus</taxon>
    </lineage>
</organism>
<keyword id="KW-0030">Aminoacyl-tRNA synthetase</keyword>
<keyword id="KW-0067">ATP-binding</keyword>
<keyword id="KW-0963">Cytoplasm</keyword>
<keyword id="KW-0436">Ligase</keyword>
<keyword id="KW-0460">Magnesium</keyword>
<keyword id="KW-0479">Metal-binding</keyword>
<keyword id="KW-0547">Nucleotide-binding</keyword>
<keyword id="KW-0648">Protein biosynthesis</keyword>
<gene>
    <name evidence="1" type="primary">pheT</name>
    <name type="ordered locus">YN1551_0770</name>
</gene>
<accession>C3NMS5</accession>
<evidence type="ECO:0000255" key="1">
    <source>
        <dbReference type="HAMAP-Rule" id="MF_00284"/>
    </source>
</evidence>
<sequence length="545" mass="61701">MVTIVLNKYKLLDKIHIGQQKLEDLLFNLKSEVKPIDENNIEIEINADRLDLLSSDGIARAIKGLLEKELGEAKYNVTDTEYTLIVDNVRTRPYALAAIVYNAKIDLEELIQFQEKLHGTIGRKRKKVAIGIHDLRKVDSKTIEYKEVPLSYKFVPLYGNKELTISEILEKTEQGKLYGNISIANGVSPAIVQDDGEVLSIPPIINSNKTRLDENTKDFFIDVTGTSFEAVAQTLDIIVSNLAEAGGTIGRVKVLKSANSSQLSSPLFLHKIQNVREEYVKKILGIKTSKEEICKHVMRMRMNCDIENGVIRVTVPQYRVDILNEIDVVEDIAMSIGYNNLEPSKYISTNYGSYDYMTLLERKIRELGIGAGYVEISNFVLIKDEKLFSNKYVKILNPVTEEYNAVRDSLIPGLLDFLSKNQHAKFPIRVFETGDVVVYDSSTDTGFRNDKRAAYAIMDNKVSYEDIQAPIHYILKSLGLEVNYKEENNNIFIEGRSASIFYENEKMGVIGEVNPDVLIRFGIEYPAVIAELYISEIGKRLTNQR</sequence>
<feature type="chain" id="PRO_1000204846" description="Phenylalanine--tRNA ligase beta subunit">
    <location>
        <begin position="1"/>
        <end position="545"/>
    </location>
</feature>
<feature type="domain" description="B5" evidence="1">
    <location>
        <begin position="268"/>
        <end position="343"/>
    </location>
</feature>
<feature type="binding site" evidence="1">
    <location>
        <position position="321"/>
    </location>
    <ligand>
        <name>Mg(2+)</name>
        <dbReference type="ChEBI" id="CHEBI:18420"/>
        <note>shared with alpha subunit</note>
    </ligand>
</feature>
<feature type="binding site" evidence="1">
    <location>
        <position position="327"/>
    </location>
    <ligand>
        <name>Mg(2+)</name>
        <dbReference type="ChEBI" id="CHEBI:18420"/>
        <note>shared with alpha subunit</note>
    </ligand>
</feature>
<feature type="binding site" evidence="1">
    <location>
        <position position="330"/>
    </location>
    <ligand>
        <name>Mg(2+)</name>
        <dbReference type="ChEBI" id="CHEBI:18420"/>
        <note>shared with alpha subunit</note>
    </ligand>
</feature>
<feature type="binding site" evidence="1">
    <location>
        <position position="331"/>
    </location>
    <ligand>
        <name>Mg(2+)</name>
        <dbReference type="ChEBI" id="CHEBI:18420"/>
        <note>shared with alpha subunit</note>
    </ligand>
</feature>
<protein>
    <recommendedName>
        <fullName evidence="1">Phenylalanine--tRNA ligase beta subunit</fullName>
        <ecNumber evidence="1">6.1.1.20</ecNumber>
    </recommendedName>
    <alternativeName>
        <fullName evidence="1">Phenylalanyl-tRNA synthetase beta subunit</fullName>
        <shortName evidence="1">PheRS</shortName>
    </alternativeName>
</protein>